<feature type="chain" id="PRO_0000328011" description="Importin-13 homolog A">
    <location>
        <begin position="1"/>
        <end position="1064"/>
    </location>
</feature>
<feature type="domain" description="Importin N-terminal">
    <location>
        <begin position="40"/>
        <end position="109"/>
    </location>
</feature>
<feature type="region of interest" description="Disordered" evidence="2">
    <location>
        <begin position="695"/>
        <end position="722"/>
    </location>
</feature>
<feature type="region of interest" description="Disordered" evidence="2">
    <location>
        <begin position="839"/>
        <end position="860"/>
    </location>
</feature>
<feature type="compositionally biased region" description="Low complexity" evidence="2">
    <location>
        <begin position="700"/>
        <end position="722"/>
    </location>
</feature>
<dbReference type="EMBL" id="AAFI02000199">
    <property type="protein sequence ID" value="EAL60907.1"/>
    <property type="molecule type" value="Genomic_DNA"/>
</dbReference>
<dbReference type="RefSeq" id="XP_629334.1">
    <property type="nucleotide sequence ID" value="XM_629332.1"/>
</dbReference>
<dbReference type="SMR" id="Q54C85"/>
<dbReference type="FunCoup" id="Q54C85">
    <property type="interactions" value="262"/>
</dbReference>
<dbReference type="STRING" id="44689.Q54C85"/>
<dbReference type="PaxDb" id="44689-DDB0304413"/>
<dbReference type="EnsemblProtists" id="EAL60907">
    <property type="protein sequence ID" value="EAL60907"/>
    <property type="gene ID" value="DDB_G0293110"/>
</dbReference>
<dbReference type="GeneID" id="8629058"/>
<dbReference type="KEGG" id="ddi:DDB_G0293110"/>
<dbReference type="dictyBase" id="DDB_G0293110">
    <property type="gene designation" value="ipo13A"/>
</dbReference>
<dbReference type="VEuPathDB" id="AmoebaDB:DDB_G0293110"/>
<dbReference type="eggNOG" id="KOG2022">
    <property type="taxonomic scope" value="Eukaryota"/>
</dbReference>
<dbReference type="HOGENOM" id="CLU_288767_0_0_1"/>
<dbReference type="InParanoid" id="Q54C85"/>
<dbReference type="OMA" id="DISGWYQ"/>
<dbReference type="PhylomeDB" id="Q54C85"/>
<dbReference type="PRO" id="PR:Q54C85"/>
<dbReference type="Proteomes" id="UP000002195">
    <property type="component" value="Chromosome 6"/>
</dbReference>
<dbReference type="GO" id="GO:0005737">
    <property type="term" value="C:cytoplasm"/>
    <property type="evidence" value="ECO:0000318"/>
    <property type="project" value="GO_Central"/>
</dbReference>
<dbReference type="GO" id="GO:0005635">
    <property type="term" value="C:nuclear envelope"/>
    <property type="evidence" value="ECO:0007669"/>
    <property type="project" value="UniProtKB-SubCell"/>
</dbReference>
<dbReference type="GO" id="GO:0031267">
    <property type="term" value="F:small GTPase binding"/>
    <property type="evidence" value="ECO:0007669"/>
    <property type="project" value="InterPro"/>
</dbReference>
<dbReference type="GO" id="GO:0006606">
    <property type="term" value="P:protein import into nucleus"/>
    <property type="evidence" value="ECO:0000318"/>
    <property type="project" value="GO_Central"/>
</dbReference>
<dbReference type="Gene3D" id="1.25.10.10">
    <property type="entry name" value="Leucine-rich Repeat Variant"/>
    <property type="match status" value="1"/>
</dbReference>
<dbReference type="InterPro" id="IPR011989">
    <property type="entry name" value="ARM-like"/>
</dbReference>
<dbReference type="InterPro" id="IPR016024">
    <property type="entry name" value="ARM-type_fold"/>
</dbReference>
<dbReference type="InterPro" id="IPR013598">
    <property type="entry name" value="Exportin-1/Importin-b-like"/>
</dbReference>
<dbReference type="InterPro" id="IPR001494">
    <property type="entry name" value="Importin-beta_N"/>
</dbReference>
<dbReference type="InterPro" id="IPR051345">
    <property type="entry name" value="Importin_beta-like_NTR"/>
</dbReference>
<dbReference type="InterPro" id="IPR040520">
    <property type="entry name" value="Importin_rep_3"/>
</dbReference>
<dbReference type="PANTHER" id="PTHR12363:SF52">
    <property type="entry name" value="IMPORTIN-13 HOMOLOG A"/>
    <property type="match status" value="1"/>
</dbReference>
<dbReference type="PANTHER" id="PTHR12363">
    <property type="entry name" value="TRANSPORTIN 3 AND IMPORTIN 13"/>
    <property type="match status" value="1"/>
</dbReference>
<dbReference type="Pfam" id="PF18806">
    <property type="entry name" value="Importin_rep_3"/>
    <property type="match status" value="1"/>
</dbReference>
<dbReference type="Pfam" id="PF08389">
    <property type="entry name" value="Xpo1"/>
    <property type="match status" value="1"/>
</dbReference>
<dbReference type="SMART" id="SM00913">
    <property type="entry name" value="IBN_N"/>
    <property type="match status" value="1"/>
</dbReference>
<dbReference type="SUPFAM" id="SSF48371">
    <property type="entry name" value="ARM repeat"/>
    <property type="match status" value="1"/>
</dbReference>
<evidence type="ECO:0000250" key="1"/>
<evidence type="ECO:0000256" key="2">
    <source>
        <dbReference type="SAM" id="MobiDB-lite"/>
    </source>
</evidence>
<evidence type="ECO:0000305" key="3"/>
<comment type="function">
    <text evidence="1">Required for nuclear protein import and mediates docking of import substrate to distinct nucleoporins.</text>
</comment>
<comment type="subunit">
    <text evidence="1">Forms a complex with an importin alpha subunit.</text>
</comment>
<comment type="subcellular location">
    <subcellularLocation>
        <location evidence="1">Cytoplasm</location>
    </subcellularLocation>
    <subcellularLocation>
        <location evidence="1">Nucleus envelope</location>
    </subcellularLocation>
</comment>
<comment type="similarity">
    <text evidence="3">Belongs to the importin beta family.</text>
</comment>
<name>IP13A_DICDI</name>
<organism>
    <name type="scientific">Dictyostelium discoideum</name>
    <name type="common">Social amoeba</name>
    <dbReference type="NCBI Taxonomy" id="44689"/>
    <lineage>
        <taxon>Eukaryota</taxon>
        <taxon>Amoebozoa</taxon>
        <taxon>Evosea</taxon>
        <taxon>Eumycetozoa</taxon>
        <taxon>Dictyostelia</taxon>
        <taxon>Dictyosteliales</taxon>
        <taxon>Dictyosteliaceae</taxon>
        <taxon>Dictyostelium</taxon>
    </lineage>
</organism>
<gene>
    <name type="primary">ipo13A</name>
    <name type="ORF">DDB_G0293110</name>
</gene>
<protein>
    <recommendedName>
        <fullName>Importin-13 homolog A</fullName>
    </recommendedName>
</protein>
<keyword id="KW-0963">Cytoplasm</keyword>
<keyword id="KW-0539">Nucleus</keyword>
<keyword id="KW-0653">Protein transport</keyword>
<keyword id="KW-1185">Reference proteome</keyword>
<keyword id="KW-0677">Repeat</keyword>
<keyword id="KW-0813">Transport</keyword>
<accession>Q54C85</accession>
<sequence>MYNNNGFHEETNIDESQFTVEKVETVLKSLYFPQNNDYSALPQIQQWLIQFQKSFSSWSIAPLLLMSNIKEIQYFGASTIENKIKNNWLSLSQDMKKEFLDNLLLFLKTQITKCSTVVITRLCLAVSVIACHSTTDLWANPILDVLQLSFQDINNLDCFNPNLVNLTLELLTIFPEELTNADYITQEKRNKVGLQFNKHNSKVFEILCKIMSLPQNQQTLIFMKSSLKCFKSWILFDCSPREYLIDSDLILKCFEAVSNNPKLVEDFLMVLDEMFTFMGGKIFRSYTSAFSLVLSRILMIFPSFYILALQEENQIFNQIFLLFSHIAENHIKTLLKNPELSNNFFKALIQMALKGDFETCELLSPVITEIAALHELHSTSSTTEATTTTIATTTTPTTTSDCDISGWYQYLGEMVEVFRLKSMYPLDKDISDLYEEDAEKFFAFRVIAGDSVLEVYNILEGKILQQLLNSLWSDIQSFPTTKCWQSIEATIYLLSCLSESITEDTEFVPQLFSILGQLPIQSTPLIKSTMTLAGNYSNLIDKSTIFLEKIVKDFFPAFENPDLKSVASQSFLSISKNSKCASILSNSITQLISLCAPILSNNNKILDDPSNFNILEALLYIISTLPSDSQVLNYSTQLLYPFILFIKNYYTNQLQQQQQQQQQQQTELRLLLSSINLLTKFCKIYDDEQVNEYGTTQQENNNNNNNNNNNNNNNNNNNNNNNNNNIKPVFEIINNIIPIYGELLSLNTLESSIIEAISIFYKKAIMINNNHQNITNIPEINRQLTLAFLKHKPLSLVLSTLSISIVNLPKEQHLDFLADSLSSISSKMIQIWSEKSNQNNKKNNKKINNNIDIDNDNENNNNNNQIQFENNELNEFKNLKISIYPDITKEYFTMITQYIRYNAVSIPQGVISHLFSIILVNITKIHDKVTARACFSFMALIITKSKEMKSQIKWEPLLNEINGWLSIHGELFIKQILYSAGGGIPRSVVQFISEVIASLVSSYPDVFRISALKCLSVDGFPSSNITKEQKEKFLNSLMLYRSKKLPLKIVTDFSLVSLGIATNQ</sequence>
<proteinExistence type="inferred from homology"/>
<reference key="1">
    <citation type="journal article" date="2005" name="Nature">
        <title>The genome of the social amoeba Dictyostelium discoideum.</title>
        <authorList>
            <person name="Eichinger L."/>
            <person name="Pachebat J.A."/>
            <person name="Gloeckner G."/>
            <person name="Rajandream M.A."/>
            <person name="Sucgang R."/>
            <person name="Berriman M."/>
            <person name="Song J."/>
            <person name="Olsen R."/>
            <person name="Szafranski K."/>
            <person name="Xu Q."/>
            <person name="Tunggal B."/>
            <person name="Kummerfeld S."/>
            <person name="Madera M."/>
            <person name="Konfortov B.A."/>
            <person name="Rivero F."/>
            <person name="Bankier A.T."/>
            <person name="Lehmann R."/>
            <person name="Hamlin N."/>
            <person name="Davies R."/>
            <person name="Gaudet P."/>
            <person name="Fey P."/>
            <person name="Pilcher K."/>
            <person name="Chen G."/>
            <person name="Saunders D."/>
            <person name="Sodergren E.J."/>
            <person name="Davis P."/>
            <person name="Kerhornou A."/>
            <person name="Nie X."/>
            <person name="Hall N."/>
            <person name="Anjard C."/>
            <person name="Hemphill L."/>
            <person name="Bason N."/>
            <person name="Farbrother P."/>
            <person name="Desany B."/>
            <person name="Just E."/>
            <person name="Morio T."/>
            <person name="Rost R."/>
            <person name="Churcher C.M."/>
            <person name="Cooper J."/>
            <person name="Haydock S."/>
            <person name="van Driessche N."/>
            <person name="Cronin A."/>
            <person name="Goodhead I."/>
            <person name="Muzny D.M."/>
            <person name="Mourier T."/>
            <person name="Pain A."/>
            <person name="Lu M."/>
            <person name="Harper D."/>
            <person name="Lindsay R."/>
            <person name="Hauser H."/>
            <person name="James K.D."/>
            <person name="Quiles M."/>
            <person name="Madan Babu M."/>
            <person name="Saito T."/>
            <person name="Buchrieser C."/>
            <person name="Wardroper A."/>
            <person name="Felder M."/>
            <person name="Thangavelu M."/>
            <person name="Johnson D."/>
            <person name="Knights A."/>
            <person name="Loulseged H."/>
            <person name="Mungall K.L."/>
            <person name="Oliver K."/>
            <person name="Price C."/>
            <person name="Quail M.A."/>
            <person name="Urushihara H."/>
            <person name="Hernandez J."/>
            <person name="Rabbinowitsch E."/>
            <person name="Steffen D."/>
            <person name="Sanders M."/>
            <person name="Ma J."/>
            <person name="Kohara Y."/>
            <person name="Sharp S."/>
            <person name="Simmonds M.N."/>
            <person name="Spiegler S."/>
            <person name="Tivey A."/>
            <person name="Sugano S."/>
            <person name="White B."/>
            <person name="Walker D."/>
            <person name="Woodward J.R."/>
            <person name="Winckler T."/>
            <person name="Tanaka Y."/>
            <person name="Shaulsky G."/>
            <person name="Schleicher M."/>
            <person name="Weinstock G.M."/>
            <person name="Rosenthal A."/>
            <person name="Cox E.C."/>
            <person name="Chisholm R.L."/>
            <person name="Gibbs R.A."/>
            <person name="Loomis W.F."/>
            <person name="Platzer M."/>
            <person name="Kay R.R."/>
            <person name="Williams J.G."/>
            <person name="Dear P.H."/>
            <person name="Noegel A.A."/>
            <person name="Barrell B.G."/>
            <person name="Kuspa A."/>
        </authorList>
    </citation>
    <scope>NUCLEOTIDE SEQUENCE [LARGE SCALE GENOMIC DNA]</scope>
    <source>
        <strain>AX4</strain>
    </source>
</reference>